<evidence type="ECO:0000250" key="1"/>
<evidence type="ECO:0000305" key="2"/>
<feature type="chain" id="PRO_0000163096" description="Molybdopterin synthase catalytic subunit">
    <location>
        <begin position="1"/>
        <end position="150"/>
    </location>
</feature>
<feature type="binding site" evidence="1">
    <location>
        <begin position="37"/>
        <end position="39"/>
    </location>
    <ligand>
        <name>substrate</name>
    </ligand>
</feature>
<feature type="binding site" evidence="1">
    <location>
        <begin position="103"/>
        <end position="104"/>
    </location>
    <ligand>
        <name>substrate</name>
    </ligand>
</feature>
<feature type="binding site" evidence="1">
    <location>
        <position position="119"/>
    </location>
    <ligand>
        <name>substrate</name>
    </ligand>
</feature>
<feature type="binding site" evidence="1">
    <location>
        <begin position="126"/>
        <end position="128"/>
    </location>
    <ligand>
        <name>substrate</name>
    </ligand>
</feature>
<reference key="1">
    <citation type="journal article" date="2001" name="Nature">
        <title>Complete genome sequence of Salmonella enterica serovar Typhimurium LT2.</title>
        <authorList>
            <person name="McClelland M."/>
            <person name="Sanderson K.E."/>
            <person name="Spieth J."/>
            <person name="Clifton S.W."/>
            <person name="Latreille P."/>
            <person name="Courtney L."/>
            <person name="Porwollik S."/>
            <person name="Ali J."/>
            <person name="Dante M."/>
            <person name="Du F."/>
            <person name="Hou S."/>
            <person name="Layman D."/>
            <person name="Leonard S."/>
            <person name="Nguyen C."/>
            <person name="Scott K."/>
            <person name="Holmes A."/>
            <person name="Grewal N."/>
            <person name="Mulvaney E."/>
            <person name="Ryan E."/>
            <person name="Sun H."/>
            <person name="Florea L."/>
            <person name="Miller W."/>
            <person name="Stoneking T."/>
            <person name="Nhan M."/>
            <person name="Waterston R."/>
            <person name="Wilson R.K."/>
        </authorList>
    </citation>
    <scope>NUCLEOTIDE SEQUENCE [LARGE SCALE GENOMIC DNA]</scope>
    <source>
        <strain>LT2 / SGSC1412 / ATCC 700720</strain>
    </source>
</reference>
<organism>
    <name type="scientific">Salmonella typhimurium (strain LT2 / SGSC1412 / ATCC 700720)</name>
    <dbReference type="NCBI Taxonomy" id="99287"/>
    <lineage>
        <taxon>Bacteria</taxon>
        <taxon>Pseudomonadati</taxon>
        <taxon>Pseudomonadota</taxon>
        <taxon>Gammaproteobacteria</taxon>
        <taxon>Enterobacterales</taxon>
        <taxon>Enterobacteriaceae</taxon>
        <taxon>Salmonella</taxon>
    </lineage>
</organism>
<gene>
    <name type="primary">moaE</name>
    <name type="ordered locus">STM0806</name>
</gene>
<name>MOAE_SALTY</name>
<comment type="function">
    <text evidence="1">Converts molybdopterin precursor Z into molybdopterin. This requires the incorporation of two sulfur atoms into precursor Z to generate a dithiolene group. The sulfur is provided by MoaD (By similarity).</text>
</comment>
<comment type="catalytic activity">
    <reaction>
        <text>2 [molybdopterin-synthase sulfur-carrier protein]-C-terminal-Gly-aminoethanethioate + cyclic pyranopterin phosphate + H2O = molybdopterin + 2 [molybdopterin-synthase sulfur-carrier protein]-C-terminal Gly-Gly + 2 H(+)</text>
        <dbReference type="Rhea" id="RHEA:26333"/>
        <dbReference type="Rhea" id="RHEA-COMP:12202"/>
        <dbReference type="Rhea" id="RHEA-COMP:19907"/>
        <dbReference type="ChEBI" id="CHEBI:15377"/>
        <dbReference type="ChEBI" id="CHEBI:15378"/>
        <dbReference type="ChEBI" id="CHEBI:58698"/>
        <dbReference type="ChEBI" id="CHEBI:59648"/>
        <dbReference type="ChEBI" id="CHEBI:90778"/>
        <dbReference type="ChEBI" id="CHEBI:232372"/>
        <dbReference type="EC" id="2.8.1.12"/>
    </reaction>
</comment>
<comment type="pathway">
    <text>Cofactor biosynthesis; molybdopterin biosynthesis.</text>
</comment>
<comment type="subunit">
    <text evidence="1">Heterotetramer of 2 MoaD subunits and 2 MoaE subunits. Also stable as homodimer. The enzyme changes between these two forms during catalysis (By similarity).</text>
</comment>
<comment type="similarity">
    <text evidence="2">Belongs to the MoaE family.</text>
</comment>
<sequence length="150" mass="16892">MHETRIVVGPAPFSVGEEYSWLAARDEDGAVVTFTGKVRNHNLGDSVKALTLEHYPGMTEKALAEIVAKARSRWPLGRVTVIHRVGELWPGDEIVFVGVTSAHRSSAFDAGQFIMDYLKTRAPFWKREATPEGDRWVEARDSDQQLAKRW</sequence>
<proteinExistence type="inferred from homology"/>
<dbReference type="EC" id="2.8.1.12"/>
<dbReference type="EMBL" id="AE006468">
    <property type="protein sequence ID" value="AAL19743.1"/>
    <property type="molecule type" value="Genomic_DNA"/>
</dbReference>
<dbReference type="RefSeq" id="NP_459784.1">
    <property type="nucleotide sequence ID" value="NC_003197.2"/>
</dbReference>
<dbReference type="RefSeq" id="WP_000545202.1">
    <property type="nucleotide sequence ID" value="NC_003197.2"/>
</dbReference>
<dbReference type="SMR" id="P65398"/>
<dbReference type="STRING" id="99287.STM0806"/>
<dbReference type="PaxDb" id="99287-STM0806"/>
<dbReference type="GeneID" id="1252326"/>
<dbReference type="KEGG" id="stm:STM0806"/>
<dbReference type="PATRIC" id="fig|99287.12.peg.840"/>
<dbReference type="HOGENOM" id="CLU_089568_2_1_6"/>
<dbReference type="OMA" id="WKHQFFA"/>
<dbReference type="PhylomeDB" id="P65398"/>
<dbReference type="BioCyc" id="SENT99287:STM0806-MONOMER"/>
<dbReference type="UniPathway" id="UPA00344"/>
<dbReference type="Proteomes" id="UP000001014">
    <property type="component" value="Chromosome"/>
</dbReference>
<dbReference type="GO" id="GO:0005829">
    <property type="term" value="C:cytosol"/>
    <property type="evidence" value="ECO:0000318"/>
    <property type="project" value="GO_Central"/>
</dbReference>
<dbReference type="GO" id="GO:0030366">
    <property type="term" value="F:molybdopterin synthase activity"/>
    <property type="evidence" value="ECO:0007669"/>
    <property type="project" value="UniProtKB-EC"/>
</dbReference>
<dbReference type="GO" id="GO:0006777">
    <property type="term" value="P:Mo-molybdopterin cofactor biosynthetic process"/>
    <property type="evidence" value="ECO:0007669"/>
    <property type="project" value="UniProtKB-KW"/>
</dbReference>
<dbReference type="CDD" id="cd00756">
    <property type="entry name" value="MoaE"/>
    <property type="match status" value="1"/>
</dbReference>
<dbReference type="FunFam" id="3.90.1170.40:FF:000001">
    <property type="entry name" value="Molybdopterin synthase catalytic subunit MoaE"/>
    <property type="match status" value="1"/>
</dbReference>
<dbReference type="Gene3D" id="3.90.1170.40">
    <property type="entry name" value="Molybdopterin biosynthesis MoaE subunit"/>
    <property type="match status" value="1"/>
</dbReference>
<dbReference type="InterPro" id="IPR036563">
    <property type="entry name" value="MoaE_sf"/>
</dbReference>
<dbReference type="InterPro" id="IPR003448">
    <property type="entry name" value="Mopterin_biosynth_MoaE"/>
</dbReference>
<dbReference type="NCBIfam" id="NF007959">
    <property type="entry name" value="PRK10678.1"/>
    <property type="match status" value="1"/>
</dbReference>
<dbReference type="PANTHER" id="PTHR23404">
    <property type="entry name" value="MOLYBDOPTERIN SYNTHASE RELATED"/>
    <property type="match status" value="1"/>
</dbReference>
<dbReference type="Pfam" id="PF02391">
    <property type="entry name" value="MoaE"/>
    <property type="match status" value="1"/>
</dbReference>
<dbReference type="SUPFAM" id="SSF54690">
    <property type="entry name" value="Molybdopterin synthase subunit MoaE"/>
    <property type="match status" value="1"/>
</dbReference>
<protein>
    <recommendedName>
        <fullName>Molybdopterin synthase catalytic subunit</fullName>
        <ecNumber>2.8.1.12</ecNumber>
    </recommendedName>
    <alternativeName>
        <fullName>MPT synthase subunit 2</fullName>
    </alternativeName>
    <alternativeName>
        <fullName>Molybdenum cofactor biosynthesis protein E</fullName>
    </alternativeName>
    <alternativeName>
        <fullName>Molybdopterin-converting factor large subunit</fullName>
    </alternativeName>
    <alternativeName>
        <fullName>Molybdopterin-converting factor subunit 2</fullName>
    </alternativeName>
</protein>
<keyword id="KW-0501">Molybdenum cofactor biosynthesis</keyword>
<keyword id="KW-1185">Reference proteome</keyword>
<keyword id="KW-0808">Transferase</keyword>
<accession>P65398</accession>
<accession>Q8XFQ7</accession>